<protein>
    <recommendedName>
        <fullName evidence="1">tRNA pseudouridine synthase B</fullName>
        <ecNumber evidence="1">5.4.99.25</ecNumber>
    </recommendedName>
    <alternativeName>
        <fullName evidence="1">tRNA pseudouridine(55) synthase</fullName>
        <shortName evidence="1">Psi55 synthase</shortName>
    </alternativeName>
    <alternativeName>
        <fullName evidence="1">tRNA pseudouridylate synthase</fullName>
    </alternativeName>
    <alternativeName>
        <fullName evidence="1">tRNA-uridine isomerase</fullName>
    </alternativeName>
</protein>
<feature type="chain" id="PRO_0000121803" description="tRNA pseudouridine synthase B">
    <location>
        <begin position="1"/>
        <end position="345"/>
    </location>
</feature>
<feature type="region of interest" description="Disordered" evidence="2">
    <location>
        <begin position="1"/>
        <end position="33"/>
    </location>
</feature>
<feature type="compositionally biased region" description="Basic and acidic residues" evidence="2">
    <location>
        <begin position="9"/>
        <end position="20"/>
    </location>
</feature>
<feature type="active site" description="Nucleophile" evidence="1">
    <location>
        <position position="72"/>
    </location>
</feature>
<name>TRUB_BRADU</name>
<reference key="1">
    <citation type="journal article" date="2002" name="DNA Res.">
        <title>Complete genomic sequence of nitrogen-fixing symbiotic bacterium Bradyrhizobium japonicum USDA110.</title>
        <authorList>
            <person name="Kaneko T."/>
            <person name="Nakamura Y."/>
            <person name="Sato S."/>
            <person name="Minamisawa K."/>
            <person name="Uchiumi T."/>
            <person name="Sasamoto S."/>
            <person name="Watanabe A."/>
            <person name="Idesawa K."/>
            <person name="Iriguchi M."/>
            <person name="Kawashima K."/>
            <person name="Kohara M."/>
            <person name="Matsumoto M."/>
            <person name="Shimpo S."/>
            <person name="Tsuruoka H."/>
            <person name="Wada T."/>
            <person name="Yamada M."/>
            <person name="Tabata S."/>
        </authorList>
    </citation>
    <scope>NUCLEOTIDE SEQUENCE [LARGE SCALE GENOMIC DNA]</scope>
    <source>
        <strain>JCM 10833 / BCRC 13528 / IAM 13628 / NBRC 14792 / USDA 110</strain>
    </source>
</reference>
<evidence type="ECO:0000255" key="1">
    <source>
        <dbReference type="HAMAP-Rule" id="MF_01080"/>
    </source>
</evidence>
<evidence type="ECO:0000256" key="2">
    <source>
        <dbReference type="SAM" id="MobiDB-lite"/>
    </source>
</evidence>
<sequence length="345" mass="37572">MGGNSQPHQEPRRVNNDPRAKQQKGNQVRRDRRDVHGWVVLDKPIGMTSTQAVAVLKRLFNAKRAGHAGTLDPLASGGLPIALGEATKTVPFVMDGRKRYQFTVCWGEERDTDDIEGRVTATSELRPTREAILALLPRFTGVIEQIPPRYSAIKIQGERAYDLARDGEVVELAPRPVEIHRLTLVDQPDNDRAVFEAECGKGTYVRALARDMGRILGTYGHICALRRTLVGPFGENDMIPLDQLEALCDRAASGEGSLADALLPVETALDDIPALAVTRADAARLHRGQAVLLRGRDAPTCSGTVYVTVAGRLLALAEVGNGEIIPKRVFNLTGLTASPGRNERN</sequence>
<comment type="function">
    <text evidence="1">Responsible for synthesis of pseudouridine from uracil-55 in the psi GC loop of transfer RNAs.</text>
</comment>
<comment type="catalytic activity">
    <reaction evidence="1">
        <text>uridine(55) in tRNA = pseudouridine(55) in tRNA</text>
        <dbReference type="Rhea" id="RHEA:42532"/>
        <dbReference type="Rhea" id="RHEA-COMP:10101"/>
        <dbReference type="Rhea" id="RHEA-COMP:10102"/>
        <dbReference type="ChEBI" id="CHEBI:65314"/>
        <dbReference type="ChEBI" id="CHEBI:65315"/>
        <dbReference type="EC" id="5.4.99.25"/>
    </reaction>
</comment>
<comment type="similarity">
    <text evidence="1">Belongs to the pseudouridine synthase TruB family. Type 1 subfamily.</text>
</comment>
<keyword id="KW-0413">Isomerase</keyword>
<keyword id="KW-1185">Reference proteome</keyword>
<keyword id="KW-0819">tRNA processing</keyword>
<gene>
    <name evidence="1" type="primary">truB</name>
    <name type="ordered locus">bll0781</name>
</gene>
<organism>
    <name type="scientific">Bradyrhizobium diazoefficiens (strain JCM 10833 / BCRC 13528 / IAM 13628 / NBRC 14792 / USDA 110)</name>
    <dbReference type="NCBI Taxonomy" id="224911"/>
    <lineage>
        <taxon>Bacteria</taxon>
        <taxon>Pseudomonadati</taxon>
        <taxon>Pseudomonadota</taxon>
        <taxon>Alphaproteobacteria</taxon>
        <taxon>Hyphomicrobiales</taxon>
        <taxon>Nitrobacteraceae</taxon>
        <taxon>Bradyrhizobium</taxon>
    </lineage>
</organism>
<dbReference type="EC" id="5.4.99.25" evidence="1"/>
<dbReference type="EMBL" id="BA000040">
    <property type="protein sequence ID" value="BAC46046.1"/>
    <property type="molecule type" value="Genomic_DNA"/>
</dbReference>
<dbReference type="RefSeq" id="NP_767421.1">
    <property type="nucleotide sequence ID" value="NC_004463.1"/>
</dbReference>
<dbReference type="SMR" id="Q89WB1"/>
<dbReference type="FunCoup" id="Q89WB1">
    <property type="interactions" value="611"/>
</dbReference>
<dbReference type="STRING" id="224911.AAV28_00755"/>
<dbReference type="EnsemblBacteria" id="BAC46046">
    <property type="protein sequence ID" value="BAC46046"/>
    <property type="gene ID" value="BAC46046"/>
</dbReference>
<dbReference type="KEGG" id="bja:bll0781"/>
<dbReference type="PATRIC" id="fig|224911.5.peg.805"/>
<dbReference type="eggNOG" id="COG0130">
    <property type="taxonomic scope" value="Bacteria"/>
</dbReference>
<dbReference type="HOGENOM" id="CLU_032087_0_3_5"/>
<dbReference type="InParanoid" id="Q89WB1"/>
<dbReference type="OrthoDB" id="9802309at2"/>
<dbReference type="PhylomeDB" id="Q89WB1"/>
<dbReference type="Proteomes" id="UP000002526">
    <property type="component" value="Chromosome"/>
</dbReference>
<dbReference type="GO" id="GO:0009982">
    <property type="term" value="F:pseudouridine synthase activity"/>
    <property type="evidence" value="ECO:0000318"/>
    <property type="project" value="GO_Central"/>
</dbReference>
<dbReference type="GO" id="GO:0003723">
    <property type="term" value="F:RNA binding"/>
    <property type="evidence" value="ECO:0007669"/>
    <property type="project" value="InterPro"/>
</dbReference>
<dbReference type="GO" id="GO:0160148">
    <property type="term" value="F:tRNA pseudouridine(55) synthase activity"/>
    <property type="evidence" value="ECO:0007669"/>
    <property type="project" value="UniProtKB-EC"/>
</dbReference>
<dbReference type="GO" id="GO:1990481">
    <property type="term" value="P:mRNA pseudouridine synthesis"/>
    <property type="evidence" value="ECO:0000318"/>
    <property type="project" value="GO_Central"/>
</dbReference>
<dbReference type="GO" id="GO:0006400">
    <property type="term" value="P:tRNA modification"/>
    <property type="evidence" value="ECO:0000318"/>
    <property type="project" value="GO_Central"/>
</dbReference>
<dbReference type="GO" id="GO:0031119">
    <property type="term" value="P:tRNA pseudouridine synthesis"/>
    <property type="evidence" value="ECO:0007669"/>
    <property type="project" value="UniProtKB-UniRule"/>
</dbReference>
<dbReference type="CDD" id="cd02573">
    <property type="entry name" value="PseudoU_synth_EcTruB"/>
    <property type="match status" value="1"/>
</dbReference>
<dbReference type="Gene3D" id="3.30.2350.10">
    <property type="entry name" value="Pseudouridine synthase"/>
    <property type="match status" value="1"/>
</dbReference>
<dbReference type="HAMAP" id="MF_01080">
    <property type="entry name" value="TruB_bact"/>
    <property type="match status" value="1"/>
</dbReference>
<dbReference type="InterPro" id="IPR020103">
    <property type="entry name" value="PsdUridine_synth_cat_dom_sf"/>
</dbReference>
<dbReference type="InterPro" id="IPR002501">
    <property type="entry name" value="PsdUridine_synth_N"/>
</dbReference>
<dbReference type="InterPro" id="IPR014780">
    <property type="entry name" value="tRNA_psdUridine_synth_TruB"/>
</dbReference>
<dbReference type="InterPro" id="IPR032819">
    <property type="entry name" value="TruB_C"/>
</dbReference>
<dbReference type="NCBIfam" id="TIGR00431">
    <property type="entry name" value="TruB"/>
    <property type="match status" value="1"/>
</dbReference>
<dbReference type="PANTHER" id="PTHR13767:SF2">
    <property type="entry name" value="PSEUDOURIDYLATE SYNTHASE TRUB1"/>
    <property type="match status" value="1"/>
</dbReference>
<dbReference type="PANTHER" id="PTHR13767">
    <property type="entry name" value="TRNA-PSEUDOURIDINE SYNTHASE"/>
    <property type="match status" value="1"/>
</dbReference>
<dbReference type="Pfam" id="PF16198">
    <property type="entry name" value="TruB_C_2"/>
    <property type="match status" value="1"/>
</dbReference>
<dbReference type="Pfam" id="PF01509">
    <property type="entry name" value="TruB_N"/>
    <property type="match status" value="1"/>
</dbReference>
<dbReference type="SUPFAM" id="SSF55120">
    <property type="entry name" value="Pseudouridine synthase"/>
    <property type="match status" value="1"/>
</dbReference>
<proteinExistence type="inferred from homology"/>
<accession>Q89WB1</accession>